<keyword id="KW-0150">Chloroplast</keyword>
<keyword id="KW-0249">Electron transport</keyword>
<keyword id="KW-0472">Membrane</keyword>
<keyword id="KW-0602">Photosynthesis</keyword>
<keyword id="KW-0934">Plastid</keyword>
<keyword id="KW-0793">Thylakoid</keyword>
<keyword id="KW-0812">Transmembrane</keyword>
<keyword id="KW-1133">Transmembrane helix</keyword>
<keyword id="KW-0813">Transport</keyword>
<sequence length="189" mass="20723">MGVTKKPDLNDPVLRAKLAKGMGHNYYGEPAWPNDLSYIFPVVILGTIACTIGLAVLEPSMIGEPANPFATPLEILPEWYLFPVFQILRTVPNQILRTVPNKLLGVLLMASVPAGSLTVPFLENVNQFQNPFRRPVATTVSLIGTAVALWLGIGAALPIDESLTLGLFQSNLIQLSNIKIFQIFFFSYI</sequence>
<name>PETD_PINKO</name>
<geneLocation type="chloroplast"/>
<feature type="chain" id="PRO_0000061883" description="Cytochrome b6-f complex subunit 4">
    <location>
        <begin position="1"/>
        <end position="189"/>
    </location>
</feature>
<feature type="transmembrane region" description="Helical" evidence="2">
    <location>
        <begin position="36"/>
        <end position="56"/>
    </location>
</feature>
<feature type="transmembrane region" description="Helical" evidence="2">
    <location>
        <begin position="103"/>
        <end position="123"/>
    </location>
</feature>
<feature type="transmembrane region" description="Helical" evidence="2">
    <location>
        <begin position="139"/>
        <end position="159"/>
    </location>
</feature>
<evidence type="ECO:0000250" key="1"/>
<evidence type="ECO:0000255" key="2">
    <source>
        <dbReference type="HAMAP-Rule" id="MF_01344"/>
    </source>
</evidence>
<accession>Q85X03</accession>
<reference key="1">
    <citation type="submission" date="2003-02" db="EMBL/GenBank/DDBJ databases">
        <title>Complete nucleotide sequence of Pinus koraiensis.</title>
        <authorList>
            <person name="Noh E.W."/>
            <person name="Lee J.S."/>
            <person name="Choi Y.I."/>
            <person name="Han M.S."/>
            <person name="Yi Y.S."/>
            <person name="Han S.U."/>
        </authorList>
    </citation>
    <scope>NUCLEOTIDE SEQUENCE [LARGE SCALE GENOMIC DNA]</scope>
    <source>
        <strain>KangWon16</strain>
    </source>
</reference>
<proteinExistence type="inferred from homology"/>
<comment type="function">
    <text evidence="2">Component of the cytochrome b6-f complex, which mediates electron transfer between photosystem II (PSII) and photosystem I (PSI), cyclic electron flow around PSI, and state transitions.</text>
</comment>
<comment type="subunit">
    <text evidence="1">The 4 large subunits of the cytochrome b6-f complex are cytochrome b6, subunit IV (17 kDa polypeptide, petD), cytochrome f and the Rieske protein, while the 4 small subunits are petG, petL, petM and petN. The complex functions as a dimer (By similarity).</text>
</comment>
<comment type="subcellular location">
    <subcellularLocation>
        <location evidence="2">Plastid</location>
        <location evidence="2">Chloroplast thylakoid membrane</location>
        <topology evidence="2">Multi-pass membrane protein</topology>
    </subcellularLocation>
</comment>
<comment type="similarity">
    <text evidence="2">Belongs to the cytochrome b family. PetD subfamily.</text>
</comment>
<gene>
    <name evidence="2" type="primary">petD</name>
</gene>
<organism>
    <name type="scientific">Pinus koraiensis</name>
    <name type="common">Korean pine</name>
    <dbReference type="NCBI Taxonomy" id="88728"/>
    <lineage>
        <taxon>Eukaryota</taxon>
        <taxon>Viridiplantae</taxon>
        <taxon>Streptophyta</taxon>
        <taxon>Embryophyta</taxon>
        <taxon>Tracheophyta</taxon>
        <taxon>Spermatophyta</taxon>
        <taxon>Pinopsida</taxon>
        <taxon>Pinidae</taxon>
        <taxon>Conifers I</taxon>
        <taxon>Pinales</taxon>
        <taxon>Pinaceae</taxon>
        <taxon>Pinus</taxon>
        <taxon>Pinus subgen. Strobus</taxon>
    </lineage>
</organism>
<protein>
    <recommendedName>
        <fullName evidence="2">Cytochrome b6-f complex subunit 4</fullName>
    </recommendedName>
    <alternativeName>
        <fullName evidence="2">17 kDa polypeptide</fullName>
    </alternativeName>
</protein>
<dbReference type="EMBL" id="AY228468">
    <property type="protein sequence ID" value="AAO74064.1"/>
    <property type="molecule type" value="Genomic_DNA"/>
</dbReference>
<dbReference type="RefSeq" id="NP_817216.1">
    <property type="nucleotide sequence ID" value="NC_004677.2"/>
</dbReference>
<dbReference type="SMR" id="Q85X03"/>
<dbReference type="GeneID" id="806948"/>
<dbReference type="GO" id="GO:0009535">
    <property type="term" value="C:chloroplast thylakoid membrane"/>
    <property type="evidence" value="ECO:0007669"/>
    <property type="project" value="UniProtKB-SubCell"/>
</dbReference>
<dbReference type="GO" id="GO:0045158">
    <property type="term" value="F:electron transporter, transferring electrons within cytochrome b6/f complex of photosystem II activity"/>
    <property type="evidence" value="ECO:0007669"/>
    <property type="project" value="UniProtKB-UniRule"/>
</dbReference>
<dbReference type="GO" id="GO:0045156">
    <property type="term" value="F:electron transporter, transferring electrons within the cyclic electron transport pathway of photosynthesis activity"/>
    <property type="evidence" value="ECO:0007669"/>
    <property type="project" value="InterPro"/>
</dbReference>
<dbReference type="GO" id="GO:0016491">
    <property type="term" value="F:oxidoreductase activity"/>
    <property type="evidence" value="ECO:0007669"/>
    <property type="project" value="InterPro"/>
</dbReference>
<dbReference type="GO" id="GO:0009767">
    <property type="term" value="P:photosynthetic electron transport chain"/>
    <property type="evidence" value="ECO:0007669"/>
    <property type="project" value="InterPro"/>
</dbReference>
<dbReference type="CDD" id="cd00290">
    <property type="entry name" value="cytochrome_b_C"/>
    <property type="match status" value="1"/>
</dbReference>
<dbReference type="FunFam" id="1.20.5.510:FF:000002">
    <property type="entry name" value="Cytochrome b6-f complex subunit 4"/>
    <property type="match status" value="1"/>
</dbReference>
<dbReference type="Gene3D" id="1.10.287.980">
    <property type="entry name" value="plastocyanin oxidoreductase"/>
    <property type="match status" value="1"/>
</dbReference>
<dbReference type="Gene3D" id="1.20.5.510">
    <property type="entry name" value="Single helix bin"/>
    <property type="match status" value="1"/>
</dbReference>
<dbReference type="HAMAP" id="MF_01344">
    <property type="entry name" value="Cytb6_f_subIV"/>
    <property type="match status" value="1"/>
</dbReference>
<dbReference type="InterPro" id="IPR005798">
    <property type="entry name" value="Cyt_b/b6_C"/>
</dbReference>
<dbReference type="InterPro" id="IPR036150">
    <property type="entry name" value="Cyt_b/b6_C_sf"/>
</dbReference>
<dbReference type="InterPro" id="IPR005870">
    <property type="entry name" value="Cyt_b6/f_cplx_suIV"/>
</dbReference>
<dbReference type="InterPro" id="IPR048260">
    <property type="entry name" value="Cytochrome_b_C_euk/bac"/>
</dbReference>
<dbReference type="NCBIfam" id="TIGR01156">
    <property type="entry name" value="cytb6_f_IV"/>
    <property type="match status" value="2"/>
</dbReference>
<dbReference type="PANTHER" id="PTHR19271">
    <property type="entry name" value="CYTOCHROME B"/>
    <property type="match status" value="1"/>
</dbReference>
<dbReference type="PANTHER" id="PTHR19271:SF40">
    <property type="entry name" value="CYTOCHROME B"/>
    <property type="match status" value="1"/>
</dbReference>
<dbReference type="Pfam" id="PF00032">
    <property type="entry name" value="Cytochrom_B_C"/>
    <property type="match status" value="1"/>
</dbReference>
<dbReference type="PIRSF" id="PIRSF000033">
    <property type="entry name" value="B6f_17K"/>
    <property type="match status" value="1"/>
</dbReference>
<dbReference type="SUPFAM" id="SSF81648">
    <property type="entry name" value="a domain/subunit of cytochrome bc1 complex (Ubiquinol-cytochrome c reductase)"/>
    <property type="match status" value="1"/>
</dbReference>
<dbReference type="PROSITE" id="PS51003">
    <property type="entry name" value="CYTB_CTER"/>
    <property type="match status" value="1"/>
</dbReference>